<dbReference type="EMBL" id="BA000004">
    <property type="protein sequence ID" value="BAB07571.1"/>
    <property type="molecule type" value="Genomic_DNA"/>
</dbReference>
<dbReference type="PIR" id="D84131">
    <property type="entry name" value="D84131"/>
</dbReference>
<dbReference type="RefSeq" id="WP_010899977.1">
    <property type="nucleotide sequence ID" value="NC_002570.2"/>
</dbReference>
<dbReference type="SMR" id="Q9K680"/>
<dbReference type="STRING" id="272558.gene:10729765"/>
<dbReference type="GeneID" id="87599398"/>
<dbReference type="KEGG" id="bha:BH3852"/>
<dbReference type="eggNOG" id="COG4668">
    <property type="taxonomic scope" value="Bacteria"/>
</dbReference>
<dbReference type="HOGENOM" id="CLU_072531_3_0_9"/>
<dbReference type="OrthoDB" id="1640042at2"/>
<dbReference type="Proteomes" id="UP000001258">
    <property type="component" value="Chromosome"/>
</dbReference>
<dbReference type="GO" id="GO:0005737">
    <property type="term" value="C:cytoplasm"/>
    <property type="evidence" value="ECO:0007669"/>
    <property type="project" value="UniProtKB-SubCell"/>
</dbReference>
<dbReference type="GO" id="GO:0005886">
    <property type="term" value="C:plasma membrane"/>
    <property type="evidence" value="ECO:0007669"/>
    <property type="project" value="TreeGrafter"/>
</dbReference>
<dbReference type="GO" id="GO:0016301">
    <property type="term" value="F:kinase activity"/>
    <property type="evidence" value="ECO:0007669"/>
    <property type="project" value="UniProtKB-KW"/>
</dbReference>
<dbReference type="GO" id="GO:0090563">
    <property type="term" value="F:protein-phosphocysteine-sugar phosphotransferase activity"/>
    <property type="evidence" value="ECO:0007669"/>
    <property type="project" value="TreeGrafter"/>
</dbReference>
<dbReference type="GO" id="GO:0009401">
    <property type="term" value="P:phosphoenolpyruvate-dependent sugar phosphotransferase system"/>
    <property type="evidence" value="ECO:0007669"/>
    <property type="project" value="UniProtKB-KW"/>
</dbReference>
<dbReference type="CDD" id="cd00211">
    <property type="entry name" value="PTS_IIA_fru"/>
    <property type="match status" value="1"/>
</dbReference>
<dbReference type="Gene3D" id="3.40.930.10">
    <property type="entry name" value="Mannitol-specific EII, Chain A"/>
    <property type="match status" value="1"/>
</dbReference>
<dbReference type="InterPro" id="IPR016152">
    <property type="entry name" value="PTrfase/Anion_transptr"/>
</dbReference>
<dbReference type="InterPro" id="IPR002178">
    <property type="entry name" value="PTS_EIIA_type-2_dom"/>
</dbReference>
<dbReference type="InterPro" id="IPR050893">
    <property type="entry name" value="Sugar_PTS"/>
</dbReference>
<dbReference type="PANTHER" id="PTHR30181">
    <property type="entry name" value="MANNITOL PERMEASE IIC COMPONENT"/>
    <property type="match status" value="1"/>
</dbReference>
<dbReference type="PANTHER" id="PTHR30181:SF2">
    <property type="entry name" value="PTS SYSTEM MANNITOL-SPECIFIC EIICBA COMPONENT"/>
    <property type="match status" value="1"/>
</dbReference>
<dbReference type="Pfam" id="PF00359">
    <property type="entry name" value="PTS_EIIA_2"/>
    <property type="match status" value="1"/>
</dbReference>
<dbReference type="SUPFAM" id="SSF55804">
    <property type="entry name" value="Phoshotransferase/anion transport protein"/>
    <property type="match status" value="1"/>
</dbReference>
<dbReference type="PROSITE" id="PS51094">
    <property type="entry name" value="PTS_EIIA_TYPE_2"/>
    <property type="match status" value="1"/>
</dbReference>
<dbReference type="PROSITE" id="PS00372">
    <property type="entry name" value="PTS_EIIA_TYPE_2_HIS"/>
    <property type="match status" value="1"/>
</dbReference>
<gene>
    <name type="primary">mtlF</name>
    <name type="ordered locus">BH3852</name>
</gene>
<evidence type="ECO:0000250" key="1">
    <source>
        <dbReference type="UniProtKB" id="P00550"/>
    </source>
</evidence>
<evidence type="ECO:0000250" key="2">
    <source>
        <dbReference type="UniProtKB" id="P0A0E0"/>
    </source>
</evidence>
<evidence type="ECO:0000255" key="3">
    <source>
        <dbReference type="PROSITE-ProRule" id="PRU00417"/>
    </source>
</evidence>
<evidence type="ECO:0000305" key="4"/>
<protein>
    <recommendedName>
        <fullName evidence="2">Mannitol-specific phosphotransferase enzyme IIA component</fullName>
    </recommendedName>
    <alternativeName>
        <fullName evidence="2">EIIA</fullName>
    </alternativeName>
    <alternativeName>
        <fullName evidence="2">EIII</fullName>
    </alternativeName>
    <alternativeName>
        <fullName evidence="2">PTS system mannitol-specific EIIA component</fullName>
    </alternativeName>
</protein>
<reference key="1">
    <citation type="journal article" date="2000" name="Nucleic Acids Res.">
        <title>Complete genome sequence of the alkaliphilic bacterium Bacillus halodurans and genomic sequence comparison with Bacillus subtilis.</title>
        <authorList>
            <person name="Takami H."/>
            <person name="Nakasone K."/>
            <person name="Takaki Y."/>
            <person name="Maeno G."/>
            <person name="Sasaki R."/>
            <person name="Masui N."/>
            <person name="Fuji F."/>
            <person name="Hirama C."/>
            <person name="Nakamura Y."/>
            <person name="Ogasawara N."/>
            <person name="Kuhara S."/>
            <person name="Horikoshi K."/>
        </authorList>
    </citation>
    <scope>NUCLEOTIDE SEQUENCE [LARGE SCALE GENOMIC DNA]</scope>
    <source>
        <strain>ATCC BAA-125 / DSM 18197 / FERM 7344 / JCM 9153 / C-125</strain>
    </source>
</reference>
<sequence>MSQTILSTETIKVKAEARSKEEAIKAAGTLLVEKGYVEPNYVDKMFERETVTSTYLGNYLAIPHGTEEAKEQVIHSGMSVLVFDDPVDWDGQEVRVVIGIAGKGTEHLDILSKIAITFSEEENVERLLSLESAQEVLAFLGEVNE</sequence>
<name>PTMA_HALH5</name>
<keyword id="KW-0963">Cytoplasm</keyword>
<keyword id="KW-0418">Kinase</keyword>
<keyword id="KW-0597">Phosphoprotein</keyword>
<keyword id="KW-0598">Phosphotransferase system</keyword>
<keyword id="KW-1185">Reference proteome</keyword>
<keyword id="KW-0762">Sugar transport</keyword>
<keyword id="KW-0808">Transferase</keyword>
<keyword id="KW-0813">Transport</keyword>
<organism>
    <name type="scientific">Halalkalibacterium halodurans (strain ATCC BAA-125 / DSM 18197 / FERM 7344 / JCM 9153 / C-125)</name>
    <name type="common">Bacillus halodurans</name>
    <dbReference type="NCBI Taxonomy" id="272558"/>
    <lineage>
        <taxon>Bacteria</taxon>
        <taxon>Bacillati</taxon>
        <taxon>Bacillota</taxon>
        <taxon>Bacilli</taxon>
        <taxon>Bacillales</taxon>
        <taxon>Bacillaceae</taxon>
        <taxon>Halalkalibacterium (ex Joshi et al. 2022)</taxon>
    </lineage>
</organism>
<comment type="function">
    <text evidence="2">The phosphoenolpyruvate-dependent sugar phosphotransferase system (sugar PTS), a major carbohydrate active transport system, catalyzes the phosphorylation of incoming sugar substrates concomitantly with their translocation across the cell membrane. The enzyme II CmtAB PTS system is involved in D-mannitol transport.</text>
</comment>
<comment type="subcellular location">
    <subcellularLocation>
        <location evidence="4">Cytoplasm</location>
    </subcellularLocation>
</comment>
<comment type="domain">
    <text evidence="3">The PTS EIIA type-2 domain is phosphorylated by phospho-HPr on a histidyl residue. Then, it transfers the phosphoryl group to the PTS EIIB type-2 domain.</text>
</comment>
<feature type="chain" id="PRO_0000186632" description="Mannitol-specific phosphotransferase enzyme IIA component">
    <location>
        <begin position="1"/>
        <end position="145"/>
    </location>
</feature>
<feature type="domain" description="PTS EIIA type-2" evidence="3">
    <location>
        <begin position="4"/>
        <end position="143"/>
    </location>
</feature>
<feature type="active site" description="Tele-phosphohistidine intermediate" evidence="2 3">
    <location>
        <position position="64"/>
    </location>
</feature>
<feature type="modified residue" description="Phosphohistidine; by HPr" evidence="1 2">
    <location>
        <position position="64"/>
    </location>
</feature>
<proteinExistence type="inferred from homology"/>
<accession>Q9K680</accession>